<name>PRMC_BORBU</name>
<keyword id="KW-0489">Methyltransferase</keyword>
<keyword id="KW-1185">Reference proteome</keyword>
<keyword id="KW-0949">S-adenosyl-L-methionine</keyword>
<keyword id="KW-0808">Transferase</keyword>
<dbReference type="EC" id="2.1.1.297" evidence="1"/>
<dbReference type="EMBL" id="AE000783">
    <property type="protein sequence ID" value="AAC66591.1"/>
    <property type="molecule type" value="Genomic_DNA"/>
</dbReference>
<dbReference type="PIR" id="E70124">
    <property type="entry name" value="E70124"/>
</dbReference>
<dbReference type="RefSeq" id="NP_212331.1">
    <property type="nucleotide sequence ID" value="NC_001318.1"/>
</dbReference>
<dbReference type="RefSeq" id="WP_010889701.1">
    <property type="nucleotide sequence ID" value="NC_001318.1"/>
</dbReference>
<dbReference type="STRING" id="224326.BB_0197"/>
<dbReference type="PaxDb" id="224326-BB_0197"/>
<dbReference type="EnsemblBacteria" id="AAC66591">
    <property type="protein sequence ID" value="AAC66591"/>
    <property type="gene ID" value="BB_0197"/>
</dbReference>
<dbReference type="KEGG" id="bbu:BB_0197"/>
<dbReference type="PATRIC" id="fig|224326.49.peg.593"/>
<dbReference type="HOGENOM" id="CLU_018398_3_2_12"/>
<dbReference type="OrthoDB" id="9800643at2"/>
<dbReference type="Proteomes" id="UP000001807">
    <property type="component" value="Chromosome"/>
</dbReference>
<dbReference type="GO" id="GO:0003676">
    <property type="term" value="F:nucleic acid binding"/>
    <property type="evidence" value="ECO:0007669"/>
    <property type="project" value="InterPro"/>
</dbReference>
<dbReference type="GO" id="GO:0102559">
    <property type="term" value="F:protein-(glutamine-N5) methyltransferase activity"/>
    <property type="evidence" value="ECO:0007669"/>
    <property type="project" value="UniProtKB-EC"/>
</dbReference>
<dbReference type="GO" id="GO:0036009">
    <property type="term" value="F:protein-glutamine N-methyltransferase activity"/>
    <property type="evidence" value="ECO:0007669"/>
    <property type="project" value="UniProtKB-UniRule"/>
</dbReference>
<dbReference type="GO" id="GO:0032259">
    <property type="term" value="P:methylation"/>
    <property type="evidence" value="ECO:0007669"/>
    <property type="project" value="UniProtKB-KW"/>
</dbReference>
<dbReference type="CDD" id="cd02440">
    <property type="entry name" value="AdoMet_MTases"/>
    <property type="match status" value="1"/>
</dbReference>
<dbReference type="Gene3D" id="1.10.8.10">
    <property type="entry name" value="DNA helicase RuvA subunit, C-terminal domain"/>
    <property type="match status" value="1"/>
</dbReference>
<dbReference type="Gene3D" id="3.40.50.150">
    <property type="entry name" value="Vaccinia Virus protein VP39"/>
    <property type="match status" value="1"/>
</dbReference>
<dbReference type="HAMAP" id="MF_02126">
    <property type="entry name" value="RF_methyltr_PrmC"/>
    <property type="match status" value="1"/>
</dbReference>
<dbReference type="InterPro" id="IPR002052">
    <property type="entry name" value="DNA_methylase_N6_adenine_CS"/>
</dbReference>
<dbReference type="InterPro" id="IPR004556">
    <property type="entry name" value="HemK-like"/>
</dbReference>
<dbReference type="InterPro" id="IPR050320">
    <property type="entry name" value="N5-glutamine_MTase"/>
</dbReference>
<dbReference type="InterPro" id="IPR040758">
    <property type="entry name" value="PrmC_N"/>
</dbReference>
<dbReference type="InterPro" id="IPR019874">
    <property type="entry name" value="RF_methyltr_PrmC"/>
</dbReference>
<dbReference type="InterPro" id="IPR029063">
    <property type="entry name" value="SAM-dependent_MTases_sf"/>
</dbReference>
<dbReference type="InterPro" id="IPR007848">
    <property type="entry name" value="Small_mtfrase_dom"/>
</dbReference>
<dbReference type="NCBIfam" id="TIGR00536">
    <property type="entry name" value="hemK_fam"/>
    <property type="match status" value="1"/>
</dbReference>
<dbReference type="NCBIfam" id="TIGR03534">
    <property type="entry name" value="RF_mod_PrmC"/>
    <property type="match status" value="1"/>
</dbReference>
<dbReference type="PANTHER" id="PTHR18895">
    <property type="entry name" value="HEMK METHYLTRANSFERASE"/>
    <property type="match status" value="1"/>
</dbReference>
<dbReference type="PANTHER" id="PTHR18895:SF74">
    <property type="entry name" value="MTRF1L RELEASE FACTOR GLUTAMINE METHYLTRANSFERASE"/>
    <property type="match status" value="1"/>
</dbReference>
<dbReference type="Pfam" id="PF05175">
    <property type="entry name" value="MTS"/>
    <property type="match status" value="1"/>
</dbReference>
<dbReference type="Pfam" id="PF17827">
    <property type="entry name" value="PrmC_N"/>
    <property type="match status" value="1"/>
</dbReference>
<dbReference type="SUPFAM" id="SSF53335">
    <property type="entry name" value="S-adenosyl-L-methionine-dependent methyltransferases"/>
    <property type="match status" value="1"/>
</dbReference>
<sequence>MNINEVINYAKGXNLDTIEALLILELILKTKKELIIANIKKSLTKKEKKLFFDQIDKIEKGIPIHYILQKKEFMGIEFSLNKHVLIPRFDTECLAEEALIQIQQNGFKKILDLCCGSGCIGLSIAYYIRKKVILSDISTKALQIVEKNTKKLKLEKFVEIIHSNLLKCIKGKLDIIITNPPYLNKEELEIKNKIKKEPTKALLGFGKDGLNISRKILNQAKEKLSPNGLIIIESAPWQIKSLKDFAIKKGFSHLKTIYDLEKRARALILGQRDDTSIRNCTFNQDK</sequence>
<organism>
    <name type="scientific">Borreliella burgdorferi (strain ATCC 35210 / DSM 4680 / CIP 102532 / B31)</name>
    <name type="common">Borrelia burgdorferi</name>
    <dbReference type="NCBI Taxonomy" id="224326"/>
    <lineage>
        <taxon>Bacteria</taxon>
        <taxon>Pseudomonadati</taxon>
        <taxon>Spirochaetota</taxon>
        <taxon>Spirochaetia</taxon>
        <taxon>Spirochaetales</taxon>
        <taxon>Borreliaceae</taxon>
        <taxon>Borreliella</taxon>
    </lineage>
</organism>
<gene>
    <name evidence="1" type="primary">prmC</name>
    <name type="ordered locus">BB_0197</name>
</gene>
<evidence type="ECO:0000255" key="1">
    <source>
        <dbReference type="HAMAP-Rule" id="MF_02126"/>
    </source>
</evidence>
<protein>
    <recommendedName>
        <fullName evidence="1">Release factor glutamine methyltransferase</fullName>
        <shortName evidence="1">RF MTase</shortName>
        <ecNumber evidence="1">2.1.1.297</ecNumber>
    </recommendedName>
    <alternativeName>
        <fullName evidence="1">N5-glutamine methyltransferase PrmC</fullName>
    </alternativeName>
    <alternativeName>
        <fullName evidence="1">Protein-(glutamine-N5) MTase PrmC</fullName>
    </alternativeName>
    <alternativeName>
        <fullName evidence="1">Protein-glutamine N-methyltransferase PrmC</fullName>
    </alternativeName>
</protein>
<feature type="chain" id="PRO_0000414504" description="Release factor glutamine methyltransferase">
    <location>
        <begin position="1"/>
        <end position="286"/>
    </location>
</feature>
<feature type="binding site" evidence="1">
    <location>
        <position position="136"/>
    </location>
    <ligand>
        <name>S-adenosyl-L-methionine</name>
        <dbReference type="ChEBI" id="CHEBI:59789"/>
    </ligand>
</feature>
<feature type="binding site" evidence="1">
    <location>
        <begin position="179"/>
        <end position="182"/>
    </location>
    <ligand>
        <name>substrate</name>
    </ligand>
</feature>
<feature type="binding site" evidence="1">
    <location>
        <position position="179"/>
    </location>
    <ligand>
        <name>S-adenosyl-L-methionine</name>
        <dbReference type="ChEBI" id="CHEBI:59789"/>
    </ligand>
</feature>
<reference key="1">
    <citation type="journal article" date="1997" name="Nature">
        <title>Genomic sequence of a Lyme disease spirochaete, Borrelia burgdorferi.</title>
        <authorList>
            <person name="Fraser C.M."/>
            <person name="Casjens S."/>
            <person name="Huang W.M."/>
            <person name="Sutton G.G."/>
            <person name="Clayton R.A."/>
            <person name="Lathigra R."/>
            <person name="White O."/>
            <person name="Ketchum K.A."/>
            <person name="Dodson R.J."/>
            <person name="Hickey E.K."/>
            <person name="Gwinn M.L."/>
            <person name="Dougherty B.A."/>
            <person name="Tomb J.-F."/>
            <person name="Fleischmann R.D."/>
            <person name="Richardson D.L."/>
            <person name="Peterson J.D."/>
            <person name="Kerlavage A.R."/>
            <person name="Quackenbush J."/>
            <person name="Salzberg S.L."/>
            <person name="Hanson M."/>
            <person name="van Vugt R."/>
            <person name="Palmer N."/>
            <person name="Adams M.D."/>
            <person name="Gocayne J.D."/>
            <person name="Weidman J.F."/>
            <person name="Utterback T.R."/>
            <person name="Watthey L."/>
            <person name="McDonald L.A."/>
            <person name="Artiach P."/>
            <person name="Bowman C."/>
            <person name="Garland S.A."/>
            <person name="Fujii C."/>
            <person name="Cotton M.D."/>
            <person name="Horst K."/>
            <person name="Roberts K.M."/>
            <person name="Hatch B."/>
            <person name="Smith H.O."/>
            <person name="Venter J.C."/>
        </authorList>
    </citation>
    <scope>NUCLEOTIDE SEQUENCE [LARGE SCALE GENOMIC DNA]</scope>
    <source>
        <strain>ATCC 35210 / DSM 4680 / CIP 102532 / B31</strain>
    </source>
</reference>
<comment type="function">
    <text evidence="1">Methylates the class 1 translation termination release factors RF1/PrfA and RF2/PrfB on the glutamine residue of the universally conserved GGQ motif.</text>
</comment>
<comment type="catalytic activity">
    <reaction evidence="1">
        <text>L-glutaminyl-[peptide chain release factor] + S-adenosyl-L-methionine = N(5)-methyl-L-glutaminyl-[peptide chain release factor] + S-adenosyl-L-homocysteine + H(+)</text>
        <dbReference type="Rhea" id="RHEA:42896"/>
        <dbReference type="Rhea" id="RHEA-COMP:10271"/>
        <dbReference type="Rhea" id="RHEA-COMP:10272"/>
        <dbReference type="ChEBI" id="CHEBI:15378"/>
        <dbReference type="ChEBI" id="CHEBI:30011"/>
        <dbReference type="ChEBI" id="CHEBI:57856"/>
        <dbReference type="ChEBI" id="CHEBI:59789"/>
        <dbReference type="ChEBI" id="CHEBI:61891"/>
        <dbReference type="EC" id="2.1.1.297"/>
    </reaction>
</comment>
<comment type="similarity">
    <text evidence="1">Belongs to the protein N5-glutamine methyltransferase family. PrmC subfamily.</text>
</comment>
<accession>O51215</accession>
<proteinExistence type="inferred from homology"/>